<reference key="1">
    <citation type="journal article" date="2011" name="J. Bacteriol.">
        <title>Complete genome sequence of the metabolically versatile plant growth-promoting endophyte, Variovorax paradoxus S110.</title>
        <authorList>
            <person name="Han J.I."/>
            <person name="Choi H.K."/>
            <person name="Lee S.W."/>
            <person name="Orwin P.M."/>
            <person name="Kim J."/>
            <person name="Laroe S.L."/>
            <person name="Kim T.G."/>
            <person name="O'Neil J."/>
            <person name="Leadbetter J.R."/>
            <person name="Lee S.Y."/>
            <person name="Hur C.G."/>
            <person name="Spain J.C."/>
            <person name="Ovchinnikova G."/>
            <person name="Goodwin L."/>
            <person name="Han C."/>
        </authorList>
    </citation>
    <scope>NUCLEOTIDE SEQUENCE [LARGE SCALE GENOMIC DNA]</scope>
    <source>
        <strain>S110</strain>
    </source>
</reference>
<name>RUTA_VARPS</name>
<keyword id="KW-0285">Flavoprotein</keyword>
<keyword id="KW-0288">FMN</keyword>
<keyword id="KW-0503">Monooxygenase</keyword>
<keyword id="KW-0521">NADP</keyword>
<keyword id="KW-0560">Oxidoreductase</keyword>
<comment type="function">
    <text evidence="1">Catalyzes the pyrimidine ring opening between N-3 and C-4 by an unusual flavin hydroperoxide-catalyzed mechanism, adding oxygen atoms in the process to yield ureidoacrylate peracid, that immediately reacts with FMN forming ureidoacrylate and FMN-N(5)-oxide. The FMN-N(5)-oxide reacts spontaneously with NADH to produce FMN. Requires the flavin reductase RutF to regenerate FMN in vivo.</text>
</comment>
<comment type="catalytic activity">
    <reaction evidence="1">
        <text>uracil + FMNH2 + NADH + O2 = (Z)-3-ureidoacrylate + FMN + NAD(+) + H2O + H(+)</text>
        <dbReference type="Rhea" id="RHEA:31587"/>
        <dbReference type="ChEBI" id="CHEBI:15377"/>
        <dbReference type="ChEBI" id="CHEBI:15378"/>
        <dbReference type="ChEBI" id="CHEBI:15379"/>
        <dbReference type="ChEBI" id="CHEBI:17568"/>
        <dbReference type="ChEBI" id="CHEBI:57540"/>
        <dbReference type="ChEBI" id="CHEBI:57618"/>
        <dbReference type="ChEBI" id="CHEBI:57945"/>
        <dbReference type="ChEBI" id="CHEBI:58210"/>
        <dbReference type="ChEBI" id="CHEBI:59891"/>
        <dbReference type="EC" id="1.14.99.46"/>
    </reaction>
</comment>
<comment type="catalytic activity">
    <reaction evidence="1">
        <text>thymine + FMNH2 + NADH + O2 = (Z)-2-methylureidoacrylate + FMN + NAD(+) + H2O + H(+)</text>
        <dbReference type="Rhea" id="RHEA:31599"/>
        <dbReference type="ChEBI" id="CHEBI:15377"/>
        <dbReference type="ChEBI" id="CHEBI:15378"/>
        <dbReference type="ChEBI" id="CHEBI:15379"/>
        <dbReference type="ChEBI" id="CHEBI:17821"/>
        <dbReference type="ChEBI" id="CHEBI:57540"/>
        <dbReference type="ChEBI" id="CHEBI:57618"/>
        <dbReference type="ChEBI" id="CHEBI:57945"/>
        <dbReference type="ChEBI" id="CHEBI:58210"/>
        <dbReference type="ChEBI" id="CHEBI:143783"/>
        <dbReference type="EC" id="1.14.99.46"/>
    </reaction>
</comment>
<comment type="similarity">
    <text evidence="1">Belongs to the NtaA/SnaA/DszA monooxygenase family. RutA subfamily.</text>
</comment>
<protein>
    <recommendedName>
        <fullName evidence="1">Pyrimidine monooxygenase RutA</fullName>
        <ecNumber evidence="1">1.14.99.46</ecNumber>
    </recommendedName>
</protein>
<evidence type="ECO:0000255" key="1">
    <source>
        <dbReference type="HAMAP-Rule" id="MF_01699"/>
    </source>
</evidence>
<proteinExistence type="inferred from homology"/>
<dbReference type="EC" id="1.14.99.46" evidence="1"/>
<dbReference type="EMBL" id="CP001635">
    <property type="protein sequence ID" value="ACS21442.1"/>
    <property type="molecule type" value="Genomic_DNA"/>
</dbReference>
<dbReference type="SMR" id="C5CN79"/>
<dbReference type="STRING" id="543728.Vapar_4838"/>
<dbReference type="KEGG" id="vap:Vapar_4838"/>
<dbReference type="eggNOG" id="COG2141">
    <property type="taxonomic scope" value="Bacteria"/>
</dbReference>
<dbReference type="HOGENOM" id="CLU_027853_1_1_4"/>
<dbReference type="OrthoDB" id="9814695at2"/>
<dbReference type="GO" id="GO:0008726">
    <property type="term" value="F:alkanesulfonate monooxygenase activity"/>
    <property type="evidence" value="ECO:0007669"/>
    <property type="project" value="TreeGrafter"/>
</dbReference>
<dbReference type="GO" id="GO:0052614">
    <property type="term" value="F:uracil oxygenase activity"/>
    <property type="evidence" value="ECO:0007669"/>
    <property type="project" value="UniProtKB-EC"/>
</dbReference>
<dbReference type="GO" id="GO:0046306">
    <property type="term" value="P:alkanesulfonate catabolic process"/>
    <property type="evidence" value="ECO:0007669"/>
    <property type="project" value="TreeGrafter"/>
</dbReference>
<dbReference type="GO" id="GO:0019740">
    <property type="term" value="P:nitrogen utilization"/>
    <property type="evidence" value="ECO:0007669"/>
    <property type="project" value="UniProtKB-UniRule"/>
</dbReference>
<dbReference type="GO" id="GO:0006212">
    <property type="term" value="P:uracil catabolic process"/>
    <property type="evidence" value="ECO:0007669"/>
    <property type="project" value="UniProtKB-UniRule"/>
</dbReference>
<dbReference type="CDD" id="cd01094">
    <property type="entry name" value="Alkanesulfonate_monoxygenase"/>
    <property type="match status" value="1"/>
</dbReference>
<dbReference type="FunFam" id="3.20.20.30:FF:000003">
    <property type="entry name" value="Pyrimidine monooxygenase RutA"/>
    <property type="match status" value="1"/>
</dbReference>
<dbReference type="Gene3D" id="3.20.20.30">
    <property type="entry name" value="Luciferase-like domain"/>
    <property type="match status" value="1"/>
</dbReference>
<dbReference type="HAMAP" id="MF_01699">
    <property type="entry name" value="RutA"/>
    <property type="match status" value="1"/>
</dbReference>
<dbReference type="InterPro" id="IPR011251">
    <property type="entry name" value="Luciferase-like_dom"/>
</dbReference>
<dbReference type="InterPro" id="IPR036661">
    <property type="entry name" value="Luciferase-like_sf"/>
</dbReference>
<dbReference type="InterPro" id="IPR019914">
    <property type="entry name" value="Pyrimidine_monooxygenase_RutA"/>
</dbReference>
<dbReference type="InterPro" id="IPR050172">
    <property type="entry name" value="SsuD_RutA_monooxygenase"/>
</dbReference>
<dbReference type="NCBIfam" id="TIGR03612">
    <property type="entry name" value="RutA"/>
    <property type="match status" value="1"/>
</dbReference>
<dbReference type="PANTHER" id="PTHR42847">
    <property type="entry name" value="ALKANESULFONATE MONOOXYGENASE"/>
    <property type="match status" value="1"/>
</dbReference>
<dbReference type="PANTHER" id="PTHR42847:SF4">
    <property type="entry name" value="ALKANESULFONATE MONOOXYGENASE-RELATED"/>
    <property type="match status" value="1"/>
</dbReference>
<dbReference type="Pfam" id="PF00296">
    <property type="entry name" value="Bac_luciferase"/>
    <property type="match status" value="1"/>
</dbReference>
<dbReference type="SUPFAM" id="SSF51679">
    <property type="entry name" value="Bacterial luciferase-like"/>
    <property type="match status" value="1"/>
</dbReference>
<feature type="chain" id="PRO_0000402643" description="Pyrimidine monooxygenase RutA">
    <location>
        <begin position="1"/>
        <end position="370"/>
    </location>
</feature>
<feature type="binding site" evidence="1">
    <location>
        <begin position="49"/>
        <end position="50"/>
    </location>
    <ligand>
        <name>FMN</name>
        <dbReference type="ChEBI" id="CHEBI:58210"/>
    </ligand>
</feature>
<feature type="binding site" evidence="1">
    <location>
        <position position="115"/>
    </location>
    <ligand>
        <name>FMN</name>
        <dbReference type="ChEBI" id="CHEBI:58210"/>
    </ligand>
</feature>
<feature type="binding site" evidence="1">
    <location>
        <position position="124"/>
    </location>
    <ligand>
        <name>FMN</name>
        <dbReference type="ChEBI" id="CHEBI:58210"/>
    </ligand>
</feature>
<feature type="binding site" evidence="1">
    <location>
        <begin position="140"/>
        <end position="141"/>
    </location>
    <ligand>
        <name>FMN</name>
        <dbReference type="ChEBI" id="CHEBI:58210"/>
    </ligand>
</feature>
<feature type="binding site" evidence="1">
    <location>
        <position position="190"/>
    </location>
    <ligand>
        <name>FMN</name>
        <dbReference type="ChEBI" id="CHEBI:58210"/>
    </ligand>
</feature>
<organism>
    <name type="scientific">Variovorax paradoxus (strain S110)</name>
    <dbReference type="NCBI Taxonomy" id="543728"/>
    <lineage>
        <taxon>Bacteria</taxon>
        <taxon>Pseudomonadati</taxon>
        <taxon>Pseudomonadota</taxon>
        <taxon>Betaproteobacteria</taxon>
        <taxon>Burkholderiales</taxon>
        <taxon>Comamonadaceae</taxon>
        <taxon>Variovorax</taxon>
    </lineage>
</organism>
<gene>
    <name evidence="1" type="primary">rutA</name>
    <name type="ordered locus">Vapar_4838</name>
</gene>
<sequence>MNVGIFIPIGNNGWLLSENAPQYKPSFELNKEITLTAERYGVDFVLSMIKLRGFGGKTEFWDHNLESFTLMAGLAAVTTKIKLFATAASLVMPPAIVARMASTIDSISNGRFGLNLVTGWQRPEYSQMGMWPGDQFFGTRYQYLSEYIQVLRELWGKGQSDFKGDHFQMDDCRLSPQPQADMKVICAGQSDAGMDFSARYADYNFCFGKGVNTPKAFAPAAEKLIEATRKTGRHVTTYVLMMVIADETDEAARAKWEHYKAGADHEAIAWLGQQGAADTRSGADTNVRQMADPTSAVNINMGTLVGSYATVARLLDEMAEVPGTEGVLLTFDDFVQGVAAFGERIQPLMKSRVHVQSPVPSQAEAERLAA</sequence>
<accession>C5CN79</accession>